<organism>
    <name type="scientific">Homo sapiens</name>
    <name type="common">Human</name>
    <dbReference type="NCBI Taxonomy" id="9606"/>
    <lineage>
        <taxon>Eukaryota</taxon>
        <taxon>Metazoa</taxon>
        <taxon>Chordata</taxon>
        <taxon>Craniata</taxon>
        <taxon>Vertebrata</taxon>
        <taxon>Euteleostomi</taxon>
        <taxon>Mammalia</taxon>
        <taxon>Eutheria</taxon>
        <taxon>Euarchontoglires</taxon>
        <taxon>Primates</taxon>
        <taxon>Haplorrhini</taxon>
        <taxon>Catarrhini</taxon>
        <taxon>Hominidae</taxon>
        <taxon>Homo</taxon>
    </lineage>
</organism>
<comment type="similarity">
    <text evidence="3">In the N-terminal section; belongs to the POTE family.</text>
</comment>
<comment type="similarity">
    <text evidence="3">In the C-terminal section; belongs to the actin family.</text>
</comment>
<accession>P0CG38</accession>
<feature type="chain" id="PRO_0000395413" description="POTE ankyrin domain family member I">
    <location>
        <begin position="1"/>
        <end position="1075"/>
    </location>
</feature>
<feature type="repeat" description="ANK 1">
    <location>
        <begin position="172"/>
        <end position="201"/>
    </location>
</feature>
<feature type="repeat" description="ANK 2">
    <location>
        <begin position="205"/>
        <end position="234"/>
    </location>
</feature>
<feature type="repeat" description="ANK 3">
    <location>
        <begin position="238"/>
        <end position="267"/>
    </location>
</feature>
<feature type="repeat" description="ANK 4">
    <location>
        <begin position="271"/>
        <end position="300"/>
    </location>
</feature>
<feature type="repeat" description="ANK 5">
    <location>
        <begin position="304"/>
        <end position="333"/>
    </location>
</feature>
<feature type="region of interest" description="Disordered" evidence="2">
    <location>
        <begin position="369"/>
        <end position="530"/>
    </location>
</feature>
<feature type="region of interest" description="Disordered" evidence="2">
    <location>
        <begin position="544"/>
        <end position="597"/>
    </location>
</feature>
<feature type="region of interest" description="Actin-like">
    <location>
        <begin position="703"/>
        <end position="1075"/>
    </location>
</feature>
<feature type="coiled-coil region" evidence="1">
    <location>
        <begin position="413"/>
        <end position="436"/>
    </location>
</feature>
<feature type="coiled-coil region" evidence="1">
    <location>
        <begin position="642"/>
        <end position="698"/>
    </location>
</feature>
<feature type="compositionally biased region" description="Basic and acidic residues" evidence="2">
    <location>
        <begin position="377"/>
        <end position="392"/>
    </location>
</feature>
<feature type="compositionally biased region" description="Basic and acidic residues" evidence="2">
    <location>
        <begin position="401"/>
        <end position="424"/>
    </location>
</feature>
<feature type="compositionally biased region" description="Basic and acidic residues" evidence="2">
    <location>
        <begin position="466"/>
        <end position="483"/>
    </location>
</feature>
<feature type="compositionally biased region" description="Polar residues" evidence="2">
    <location>
        <begin position="485"/>
        <end position="494"/>
    </location>
</feature>
<feature type="compositionally biased region" description="Basic and acidic residues" evidence="2">
    <location>
        <begin position="495"/>
        <end position="530"/>
    </location>
</feature>
<protein>
    <recommendedName>
        <fullName>POTE ankyrin domain family member I</fullName>
    </recommendedName>
</protein>
<proteinExistence type="evidence at protein level"/>
<gene>
    <name type="primary">POTEI</name>
</gene>
<name>POTEI_HUMAN</name>
<reference key="1">
    <citation type="journal article" date="2005" name="Nature">
        <title>Generation and annotation of the DNA sequences of human chromosomes 2 and 4.</title>
        <authorList>
            <person name="Hillier L.W."/>
            <person name="Graves T.A."/>
            <person name="Fulton R.S."/>
            <person name="Fulton L.A."/>
            <person name="Pepin K.H."/>
            <person name="Minx P."/>
            <person name="Wagner-McPherson C."/>
            <person name="Layman D."/>
            <person name="Wylie K."/>
            <person name="Sekhon M."/>
            <person name="Becker M.C."/>
            <person name="Fewell G.A."/>
            <person name="Delehaunty K.D."/>
            <person name="Miner T.L."/>
            <person name="Nash W.E."/>
            <person name="Kremitzki C."/>
            <person name="Oddy L."/>
            <person name="Du H."/>
            <person name="Sun H."/>
            <person name="Bradshaw-Cordum H."/>
            <person name="Ali J."/>
            <person name="Carter J."/>
            <person name="Cordes M."/>
            <person name="Harris A."/>
            <person name="Isak A."/>
            <person name="van Brunt A."/>
            <person name="Nguyen C."/>
            <person name="Du F."/>
            <person name="Courtney L."/>
            <person name="Kalicki J."/>
            <person name="Ozersky P."/>
            <person name="Abbott S."/>
            <person name="Armstrong J."/>
            <person name="Belter E.A."/>
            <person name="Caruso L."/>
            <person name="Cedroni M."/>
            <person name="Cotton M."/>
            <person name="Davidson T."/>
            <person name="Desai A."/>
            <person name="Elliott G."/>
            <person name="Erb T."/>
            <person name="Fronick C."/>
            <person name="Gaige T."/>
            <person name="Haakenson W."/>
            <person name="Haglund K."/>
            <person name="Holmes A."/>
            <person name="Harkins R."/>
            <person name="Kim K."/>
            <person name="Kruchowski S.S."/>
            <person name="Strong C.M."/>
            <person name="Grewal N."/>
            <person name="Goyea E."/>
            <person name="Hou S."/>
            <person name="Levy A."/>
            <person name="Martinka S."/>
            <person name="Mead K."/>
            <person name="McLellan M.D."/>
            <person name="Meyer R."/>
            <person name="Randall-Maher J."/>
            <person name="Tomlinson C."/>
            <person name="Dauphin-Kohlberg S."/>
            <person name="Kozlowicz-Reilly A."/>
            <person name="Shah N."/>
            <person name="Swearengen-Shahid S."/>
            <person name="Snider J."/>
            <person name="Strong J.T."/>
            <person name="Thompson J."/>
            <person name="Yoakum M."/>
            <person name="Leonard S."/>
            <person name="Pearman C."/>
            <person name="Trani L."/>
            <person name="Radionenko M."/>
            <person name="Waligorski J.E."/>
            <person name="Wang C."/>
            <person name="Rock S.M."/>
            <person name="Tin-Wollam A.-M."/>
            <person name="Maupin R."/>
            <person name="Latreille P."/>
            <person name="Wendl M.C."/>
            <person name="Yang S.-P."/>
            <person name="Pohl C."/>
            <person name="Wallis J.W."/>
            <person name="Spieth J."/>
            <person name="Bieri T.A."/>
            <person name="Berkowicz N."/>
            <person name="Nelson J.O."/>
            <person name="Osborne J."/>
            <person name="Ding L."/>
            <person name="Meyer R."/>
            <person name="Sabo A."/>
            <person name="Shotland Y."/>
            <person name="Sinha P."/>
            <person name="Wohldmann P.E."/>
            <person name="Cook L.L."/>
            <person name="Hickenbotham M.T."/>
            <person name="Eldred J."/>
            <person name="Williams D."/>
            <person name="Jones T.A."/>
            <person name="She X."/>
            <person name="Ciccarelli F.D."/>
            <person name="Izaurralde E."/>
            <person name="Taylor J."/>
            <person name="Schmutz J."/>
            <person name="Myers R.M."/>
            <person name="Cox D.R."/>
            <person name="Huang X."/>
            <person name="McPherson J.D."/>
            <person name="Mardis E.R."/>
            <person name="Clifton S.W."/>
            <person name="Warren W.C."/>
            <person name="Chinwalla A.T."/>
            <person name="Eddy S.R."/>
            <person name="Marra M.A."/>
            <person name="Ovcharenko I."/>
            <person name="Furey T.S."/>
            <person name="Miller W."/>
            <person name="Eichler E.E."/>
            <person name="Bork P."/>
            <person name="Suyama M."/>
            <person name="Torrents D."/>
            <person name="Waterston R.H."/>
            <person name="Wilson R.K."/>
        </authorList>
    </citation>
    <scope>NUCLEOTIDE SEQUENCE [LARGE SCALE GENOMIC DNA]</scope>
</reference>
<sequence length="1075" mass="121282">MVAEVDSMPAASSVKKPFVLRSKMGKWCRHCFPCCRGSGKSNVGTSGDQDDSTMKTLRSKMGKWCCHCFPCCRGSGKSNVGTSGDHDDSAMKTLRSKMGKWCCHCFPCCRGSGKSNVGAWGDYDDSAFVEPRYHVRREDLDKLHRAAWWGKVARKDLIVMLRDTDVNKQDKQKRTALHLASANGNSGVVKLLLDRRCQLNVLDNKKRTALTKAVQCQEDECALMLLEHGTDPNIPDEYGNTTLHYAIYNEDKLMAKALLLYGADIESKNKHGLTPLLLGVHEQKQQVVKFLIKKKANLNALDRYGRTALILAVCCGSASIVSLLLEQNIDVSSQDLSGQTAREYAVSSHHHVICQLLSDYKEKQMLKISSENSNPEQDLKLTSEEESQRFKGSENSQPEKMSQEPEINKDGDREVEEEMKKHESNNVGLLENLSNGVTAGNGDDGLIPQRKSRTPENQQFPDNESEEYHRICELVSDYKEKQMPKYSSENSNPEQDLKLTSEEESQRLKGSENGQPEKRSQEPEINKDGDRELENFMAIEEMKKHGSTHVGFPENLTNGATAGNGDDGLIPPRKSRTPESQQFPDTENEEYHSDEQNDTQKQFCEEQNTGILHDEILIHEEKQIEVVEKMNSELSLSCKKEKDFLHENSTLREEIAMLRLELDTMKHQSQLRKKKYLEDIESVKKKNDNLLKALQLNELTMDDDTAVLVIDNGSGMCKAGFAGDDAPRAVFPSIVGRPRQQGMMGGMHQKESYVGKEAQSKRGILTLKYPMEHGIITNWDDMEKIWHHTFYNELRVAPEEHPILLTEAPLNPKANREKMTQIMFETFNTPAMYVAIQAMLSLYTSGRTTGIVMDSGDGVTHTVPIYDGNALPHATLRLDLAGRELTDYLMKILTERGYRFTTMAEREIVRDIKEKLCYVALDFEQEMAMAASSSSLEKSYELPDGQVITIGNEWFRCPEALFQPCFLGMESCGIHETTFNSIMKSDVDIRKDLYTNTVLSGGTTMYPGMAHRMQKEIAALAPSMLKIRIIAPPKRKYSVWVGGSILASLSTFQQMWISKQEYDESGPSIVHRKCF</sequence>
<evidence type="ECO:0000255" key="1"/>
<evidence type="ECO:0000256" key="2">
    <source>
        <dbReference type="SAM" id="MobiDB-lite"/>
    </source>
</evidence>
<evidence type="ECO:0000305" key="3"/>
<dbReference type="EMBL" id="AC013269">
    <property type="status" value="NOT_ANNOTATED_CDS"/>
    <property type="molecule type" value="Genomic_DNA"/>
</dbReference>
<dbReference type="CCDS" id="CCDS59431.1"/>
<dbReference type="RefSeq" id="NP_001264335.1">
    <property type="nucleotide sequence ID" value="NM_001277406.2"/>
</dbReference>
<dbReference type="RefSeq" id="XP_024308814.1">
    <property type="nucleotide sequence ID" value="XM_024453046.2"/>
</dbReference>
<dbReference type="SMR" id="P0CG38"/>
<dbReference type="BioGRID" id="575653">
    <property type="interactions" value="115"/>
</dbReference>
<dbReference type="FunCoup" id="P0CG38">
    <property type="interactions" value="267"/>
</dbReference>
<dbReference type="IntAct" id="P0CG38">
    <property type="interactions" value="79"/>
</dbReference>
<dbReference type="MINT" id="P0CG38"/>
<dbReference type="STRING" id="9606.ENSP00000392718"/>
<dbReference type="GlyGen" id="P0CG38">
    <property type="glycosylation" value="3 sites, 2 N-linked glycans (2 sites), 1 O-linked glycan (1 site)"/>
</dbReference>
<dbReference type="iPTMnet" id="P0CG38"/>
<dbReference type="MetOSite" id="P0CG38"/>
<dbReference type="PhosphoSitePlus" id="P0CG38"/>
<dbReference type="SwissPalm" id="P0CG38"/>
<dbReference type="BioMuta" id="POTEI"/>
<dbReference type="DMDM" id="300681051"/>
<dbReference type="jPOST" id="P0CG38"/>
<dbReference type="MassIVE" id="P0CG38"/>
<dbReference type="PaxDb" id="9606-ENSP00000392718"/>
<dbReference type="PeptideAtlas" id="P0CG38"/>
<dbReference type="PRIDE" id="P0CG38"/>
<dbReference type="ProteomicsDB" id="52468"/>
<dbReference type="Pumba" id="P0CG38"/>
<dbReference type="TopDownProteomics" id="P0CG38"/>
<dbReference type="DNASU" id="653269"/>
<dbReference type="Ensembl" id="ENST00000451531.7">
    <property type="protein sequence ID" value="ENSP00000392718.2"/>
    <property type="gene ID" value="ENSG00000196834.14"/>
</dbReference>
<dbReference type="GeneID" id="653269"/>
<dbReference type="KEGG" id="hsa:653269"/>
<dbReference type="MANE-Select" id="ENST00000451531.7">
    <property type="protein sequence ID" value="ENSP00000392718.2"/>
    <property type="RefSeq nucleotide sequence ID" value="NM_001277406.2"/>
    <property type="RefSeq protein sequence ID" value="NP_001264335.1"/>
</dbReference>
<dbReference type="UCSC" id="uc031rpa.2">
    <property type="organism name" value="human"/>
</dbReference>
<dbReference type="AGR" id="HGNC:37093"/>
<dbReference type="CTD" id="653269"/>
<dbReference type="DisGeNET" id="653269"/>
<dbReference type="GeneCards" id="POTEI"/>
<dbReference type="HGNC" id="HGNC:37093">
    <property type="gene designation" value="POTEI"/>
</dbReference>
<dbReference type="HPA" id="ENSG00000196834">
    <property type="expression patterns" value="Group enriched (prostate, testis)"/>
</dbReference>
<dbReference type="neXtProt" id="NX_P0CG38"/>
<dbReference type="OpenTargets" id="ENSG00000196834"/>
<dbReference type="PharmGKB" id="PA165697301"/>
<dbReference type="VEuPathDB" id="HostDB:ENSG00000196834"/>
<dbReference type="eggNOG" id="KOG0676">
    <property type="taxonomic scope" value="Eukaryota"/>
</dbReference>
<dbReference type="GeneTree" id="ENSGT00940000163068"/>
<dbReference type="HOGENOM" id="CLU_010163_0_0_1"/>
<dbReference type="InParanoid" id="P0CG38"/>
<dbReference type="OMA" id="ENCMAIV"/>
<dbReference type="OrthoDB" id="9460435at2759"/>
<dbReference type="PAN-GO" id="P0CG38">
    <property type="GO annotations" value="0 GO annotations based on evolutionary models"/>
</dbReference>
<dbReference type="PhylomeDB" id="P0CG38"/>
<dbReference type="TreeFam" id="TF354237"/>
<dbReference type="PathwayCommons" id="P0CG38"/>
<dbReference type="SignaLink" id="P0CG38"/>
<dbReference type="BioGRID-ORCS" id="653269">
    <property type="hits" value="224 hits in 1006 CRISPR screens"/>
</dbReference>
<dbReference type="ChiTaRS" id="POTEI">
    <property type="organism name" value="human"/>
</dbReference>
<dbReference type="GenomeRNAi" id="653269"/>
<dbReference type="Pharos" id="P0CG38">
    <property type="development level" value="Tdark"/>
</dbReference>
<dbReference type="PRO" id="PR:P0CG38"/>
<dbReference type="Proteomes" id="UP000005640">
    <property type="component" value="Chromosome 2"/>
</dbReference>
<dbReference type="RNAct" id="P0CG38">
    <property type="molecule type" value="protein"/>
</dbReference>
<dbReference type="Bgee" id="ENSG00000196834">
    <property type="expression patterns" value="Expressed in male germ line stem cell (sensu Vertebrata) in testis and 23 other cell types or tissues"/>
</dbReference>
<dbReference type="ExpressionAtlas" id="P0CG38">
    <property type="expression patterns" value="baseline and differential"/>
</dbReference>
<dbReference type="GO" id="GO:0015629">
    <property type="term" value="C:actin cytoskeleton"/>
    <property type="evidence" value="ECO:0000318"/>
    <property type="project" value="GO_Central"/>
</dbReference>
<dbReference type="GO" id="GO:0005884">
    <property type="term" value="C:actin filament"/>
    <property type="evidence" value="ECO:0000318"/>
    <property type="project" value="GO_Central"/>
</dbReference>
<dbReference type="GO" id="GO:0030424">
    <property type="term" value="C:axon"/>
    <property type="evidence" value="ECO:0000318"/>
    <property type="project" value="GO_Central"/>
</dbReference>
<dbReference type="GO" id="GO:0005737">
    <property type="term" value="C:cytoplasm"/>
    <property type="evidence" value="ECO:0000318"/>
    <property type="project" value="GO_Central"/>
</dbReference>
<dbReference type="GO" id="GO:0070062">
    <property type="term" value="C:extracellular exosome"/>
    <property type="evidence" value="ECO:0007005"/>
    <property type="project" value="UniProtKB"/>
</dbReference>
<dbReference type="GO" id="GO:0005615">
    <property type="term" value="C:extracellular space"/>
    <property type="evidence" value="ECO:0007005"/>
    <property type="project" value="UniProtKB"/>
</dbReference>
<dbReference type="GO" id="GO:0016020">
    <property type="term" value="C:membrane"/>
    <property type="evidence" value="ECO:0000318"/>
    <property type="project" value="GO_Central"/>
</dbReference>
<dbReference type="GO" id="GO:0035267">
    <property type="term" value="C:NuA4 histone acetyltransferase complex"/>
    <property type="evidence" value="ECO:0000318"/>
    <property type="project" value="GO_Central"/>
</dbReference>
<dbReference type="GO" id="GO:0045202">
    <property type="term" value="C:synapse"/>
    <property type="evidence" value="ECO:0000318"/>
    <property type="project" value="GO_Central"/>
</dbReference>
<dbReference type="GO" id="GO:0019901">
    <property type="term" value="F:protein kinase binding"/>
    <property type="evidence" value="ECO:0000318"/>
    <property type="project" value="GO_Central"/>
</dbReference>
<dbReference type="GO" id="GO:0098973">
    <property type="term" value="F:structural constituent of postsynaptic actin cytoskeleton"/>
    <property type="evidence" value="ECO:0000318"/>
    <property type="project" value="GO_Central"/>
</dbReference>
<dbReference type="GO" id="GO:0007409">
    <property type="term" value="P:axonogenesis"/>
    <property type="evidence" value="ECO:0000318"/>
    <property type="project" value="GO_Central"/>
</dbReference>
<dbReference type="GO" id="GO:0048870">
    <property type="term" value="P:cell motility"/>
    <property type="evidence" value="ECO:0000318"/>
    <property type="project" value="GO_Central"/>
</dbReference>
<dbReference type="CDD" id="cd10224">
    <property type="entry name" value="ASKHA_NBD_actin"/>
    <property type="match status" value="1"/>
</dbReference>
<dbReference type="FunFam" id="3.30.420.40:FF:000291">
    <property type="entry name" value="Actin, alpha skeletal muscle"/>
    <property type="match status" value="1"/>
</dbReference>
<dbReference type="FunFam" id="3.90.640.10:FF:000047">
    <property type="entry name" value="Actin, alpha skeletal muscle"/>
    <property type="match status" value="1"/>
</dbReference>
<dbReference type="FunFam" id="3.30.420.40:FF:000404">
    <property type="entry name" value="Major actin"/>
    <property type="match status" value="1"/>
</dbReference>
<dbReference type="FunFam" id="1.25.40.20:FF:000581">
    <property type="entry name" value="POTE ankyrin domain family member E"/>
    <property type="match status" value="1"/>
</dbReference>
<dbReference type="FunFam" id="3.30.420.40:FF:000058">
    <property type="entry name" value="Putative actin-related protein 5"/>
    <property type="match status" value="1"/>
</dbReference>
<dbReference type="Gene3D" id="3.30.420.40">
    <property type="match status" value="2"/>
</dbReference>
<dbReference type="Gene3D" id="3.90.640.10">
    <property type="entry name" value="Actin, Chain A, domain 4"/>
    <property type="match status" value="1"/>
</dbReference>
<dbReference type="Gene3D" id="1.25.40.20">
    <property type="entry name" value="Ankyrin repeat-containing domain"/>
    <property type="match status" value="1"/>
</dbReference>
<dbReference type="InterPro" id="IPR004000">
    <property type="entry name" value="Actin"/>
</dbReference>
<dbReference type="InterPro" id="IPR020902">
    <property type="entry name" value="Actin/actin-like_CS"/>
</dbReference>
<dbReference type="InterPro" id="IPR004001">
    <property type="entry name" value="Actin_CS"/>
</dbReference>
<dbReference type="InterPro" id="IPR002110">
    <property type="entry name" value="Ankyrin_rpt"/>
</dbReference>
<dbReference type="InterPro" id="IPR036770">
    <property type="entry name" value="Ankyrin_rpt-contain_sf"/>
</dbReference>
<dbReference type="InterPro" id="IPR043129">
    <property type="entry name" value="ATPase_NBD"/>
</dbReference>
<dbReference type="InterPro" id="IPR039497">
    <property type="entry name" value="CC144C-like_CC_dom"/>
</dbReference>
<dbReference type="PANTHER" id="PTHR11937">
    <property type="entry name" value="ACTIN"/>
    <property type="match status" value="1"/>
</dbReference>
<dbReference type="Pfam" id="PF00022">
    <property type="entry name" value="Actin"/>
    <property type="match status" value="1"/>
</dbReference>
<dbReference type="Pfam" id="PF12796">
    <property type="entry name" value="Ank_2"/>
    <property type="match status" value="2"/>
</dbReference>
<dbReference type="Pfam" id="PF14915">
    <property type="entry name" value="CCDC144C"/>
    <property type="match status" value="1"/>
</dbReference>
<dbReference type="PRINTS" id="PR00190">
    <property type="entry name" value="ACTIN"/>
</dbReference>
<dbReference type="SMART" id="SM00268">
    <property type="entry name" value="ACTIN"/>
    <property type="match status" value="1"/>
</dbReference>
<dbReference type="SMART" id="SM00248">
    <property type="entry name" value="ANK"/>
    <property type="match status" value="6"/>
</dbReference>
<dbReference type="SUPFAM" id="SSF53067">
    <property type="entry name" value="Actin-like ATPase domain"/>
    <property type="match status" value="2"/>
</dbReference>
<dbReference type="SUPFAM" id="SSF48403">
    <property type="entry name" value="Ankyrin repeat"/>
    <property type="match status" value="1"/>
</dbReference>
<dbReference type="PROSITE" id="PS00432">
    <property type="entry name" value="ACTINS_2"/>
    <property type="match status" value="1"/>
</dbReference>
<dbReference type="PROSITE" id="PS01132">
    <property type="entry name" value="ACTINS_ACT_LIKE"/>
    <property type="match status" value="1"/>
</dbReference>
<dbReference type="PROSITE" id="PS50297">
    <property type="entry name" value="ANK_REP_REGION"/>
    <property type="match status" value="1"/>
</dbReference>
<dbReference type="PROSITE" id="PS50088">
    <property type="entry name" value="ANK_REPEAT"/>
    <property type="match status" value="4"/>
</dbReference>
<keyword id="KW-0040">ANK repeat</keyword>
<keyword id="KW-0175">Coiled coil</keyword>
<keyword id="KW-1267">Proteomics identification</keyword>
<keyword id="KW-1185">Reference proteome</keyword>
<keyword id="KW-0677">Repeat</keyword>